<proteinExistence type="inferred from homology"/>
<keyword id="KW-0007">Acetylation</keyword>
<keyword id="KW-0963">Cytoplasm</keyword>
<keyword id="KW-1015">Disulfide bond</keyword>
<keyword id="KW-0521">NADP</keyword>
<keyword id="KW-0810">Translation regulation</keyword>
<keyword id="KW-0043">Tumor suppressor</keyword>
<reference key="1">
    <citation type="submission" date="2006-08" db="EMBL/GenBank/DDBJ databases">
        <title>Positive selection in transcription factor genes on the human lineage.</title>
        <authorList>
            <person name="Nickel G.C."/>
            <person name="Tefft D.L."/>
            <person name="Trevarthen K."/>
            <person name="Funt J."/>
            <person name="Adams M.D."/>
        </authorList>
    </citation>
    <scope>NUCLEOTIDE SEQUENCE [GENOMIC DNA]</scope>
</reference>
<organism>
    <name type="scientific">Pongo pygmaeus</name>
    <name type="common">Bornean orangutan</name>
    <dbReference type="NCBI Taxonomy" id="9600"/>
    <lineage>
        <taxon>Eukaryota</taxon>
        <taxon>Metazoa</taxon>
        <taxon>Chordata</taxon>
        <taxon>Craniata</taxon>
        <taxon>Vertebrata</taxon>
        <taxon>Euteleostomi</taxon>
        <taxon>Mammalia</taxon>
        <taxon>Eutheria</taxon>
        <taxon>Euarchontoglires</taxon>
        <taxon>Primates</taxon>
        <taxon>Haplorrhini</taxon>
        <taxon>Catarrhini</taxon>
        <taxon>Hominidae</taxon>
        <taxon>Pongo</taxon>
    </lineage>
</organism>
<feature type="initiator methionine" description="Removed" evidence="2">
    <location>
        <position position="1"/>
    </location>
</feature>
<feature type="chain" id="PRO_0000285512" description="Protein HTATIP2">
    <location>
        <begin position="2"/>
        <end position="242"/>
    </location>
</feature>
<feature type="region of interest" description="Required for interaction with elongation factor EEF1A1" evidence="1">
    <location>
        <begin position="2"/>
        <end position="25"/>
    </location>
</feature>
<feature type="active site" description="Proton acceptor" evidence="2">
    <location>
        <position position="143"/>
    </location>
</feature>
<feature type="active site" evidence="2">
    <location>
        <position position="147"/>
    </location>
</feature>
<feature type="binding site" evidence="2">
    <location>
        <position position="27"/>
    </location>
    <ligand>
        <name>NADPH</name>
        <dbReference type="ChEBI" id="CHEBI:57783"/>
    </ligand>
</feature>
<feature type="binding site" evidence="2">
    <location>
        <position position="28"/>
    </location>
    <ligand>
        <name>NADPH</name>
        <dbReference type="ChEBI" id="CHEBI:57783"/>
    </ligand>
</feature>
<feature type="binding site" evidence="2">
    <location>
        <position position="29"/>
    </location>
    <ligand>
        <name>NADPH</name>
        <dbReference type="ChEBI" id="CHEBI:57783"/>
    </ligand>
</feature>
<feature type="binding site" evidence="2">
    <location>
        <position position="30"/>
    </location>
    <ligand>
        <name>NADPH</name>
        <dbReference type="ChEBI" id="CHEBI:57783"/>
    </ligand>
</feature>
<feature type="binding site" evidence="2">
    <location>
        <position position="52"/>
    </location>
    <ligand>
        <name>NADPH</name>
        <dbReference type="ChEBI" id="CHEBI:57783"/>
    </ligand>
</feature>
<feature type="binding site" evidence="2">
    <location>
        <position position="53"/>
    </location>
    <ligand>
        <name>NADPH</name>
        <dbReference type="ChEBI" id="CHEBI:57783"/>
    </ligand>
</feature>
<feature type="binding site" evidence="2">
    <location>
        <position position="92"/>
    </location>
    <ligand>
        <name>NADPH</name>
        <dbReference type="ChEBI" id="CHEBI:57783"/>
    </ligand>
</feature>
<feature type="binding site" evidence="2">
    <location>
        <position position="93"/>
    </location>
    <ligand>
        <name>NADPH</name>
        <dbReference type="ChEBI" id="CHEBI:57783"/>
    </ligand>
</feature>
<feature type="binding site" evidence="2">
    <location>
        <position position="143"/>
    </location>
    <ligand>
        <name>NADPH</name>
        <dbReference type="ChEBI" id="CHEBI:57783"/>
    </ligand>
</feature>
<feature type="binding site" evidence="2">
    <location>
        <position position="147"/>
    </location>
    <ligand>
        <name>NADPH</name>
        <dbReference type="ChEBI" id="CHEBI:57783"/>
    </ligand>
</feature>
<feature type="binding site" evidence="2">
    <location>
        <position position="170"/>
    </location>
    <ligand>
        <name>NADPH</name>
        <dbReference type="ChEBI" id="CHEBI:57783"/>
    </ligand>
</feature>
<feature type="binding site" evidence="2">
    <location>
        <position position="178"/>
    </location>
    <ligand>
        <name>NADPH</name>
        <dbReference type="ChEBI" id="CHEBI:57783"/>
    </ligand>
</feature>
<feature type="modified residue" description="N-acetylalanine" evidence="2">
    <location>
        <position position="2"/>
    </location>
</feature>
<feature type="disulfide bond" description="Interchain; during oxidative stress" evidence="2">
    <location>
        <position position="172"/>
    </location>
</feature>
<protein>
    <recommendedName>
        <fullName evidence="3">Protein HTATIP2</fullName>
    </recommendedName>
</protein>
<evidence type="ECO:0000250" key="1">
    <source>
        <dbReference type="UniProtKB" id="B0BNF8"/>
    </source>
</evidence>
<evidence type="ECO:0000250" key="2">
    <source>
        <dbReference type="UniProtKB" id="Q9BUP3"/>
    </source>
</evidence>
<evidence type="ECO:0000305" key="3"/>
<name>HTAI2_PONPY</name>
<dbReference type="EMBL" id="DQ977473">
    <property type="protein sequence ID" value="ABM89247.1"/>
    <property type="molecule type" value="Genomic_DNA"/>
</dbReference>
<dbReference type="SMR" id="A2T7G9"/>
<dbReference type="GO" id="GO:0005737">
    <property type="term" value="C:cytoplasm"/>
    <property type="evidence" value="ECO:0007669"/>
    <property type="project" value="UniProtKB-SubCell"/>
</dbReference>
<dbReference type="GO" id="GO:0005635">
    <property type="term" value="C:nuclear envelope"/>
    <property type="evidence" value="ECO:0007669"/>
    <property type="project" value="UniProtKB-SubCell"/>
</dbReference>
<dbReference type="GO" id="GO:0051287">
    <property type="term" value="F:NAD binding"/>
    <property type="evidence" value="ECO:0007669"/>
    <property type="project" value="InterPro"/>
</dbReference>
<dbReference type="GO" id="GO:0016620">
    <property type="term" value="F:oxidoreductase activity, acting on the aldehyde or oxo group of donors, NAD or NADP as acceptor"/>
    <property type="evidence" value="ECO:0007669"/>
    <property type="project" value="InterPro"/>
</dbReference>
<dbReference type="GO" id="GO:1901607">
    <property type="term" value="P:alpha-amino acid biosynthetic process"/>
    <property type="evidence" value="ECO:0007669"/>
    <property type="project" value="UniProtKB-ARBA"/>
</dbReference>
<dbReference type="GO" id="GO:0001525">
    <property type="term" value="P:angiogenesis"/>
    <property type="evidence" value="ECO:0007669"/>
    <property type="project" value="UniProtKB-KW"/>
</dbReference>
<dbReference type="GO" id="GO:0006915">
    <property type="term" value="P:apoptotic process"/>
    <property type="evidence" value="ECO:0007669"/>
    <property type="project" value="UniProtKB-KW"/>
</dbReference>
<dbReference type="GO" id="GO:0030154">
    <property type="term" value="P:cell differentiation"/>
    <property type="evidence" value="ECO:0007669"/>
    <property type="project" value="UniProtKB-KW"/>
</dbReference>
<dbReference type="GO" id="GO:0051170">
    <property type="term" value="P:import into nucleus"/>
    <property type="evidence" value="ECO:0007669"/>
    <property type="project" value="TreeGrafter"/>
</dbReference>
<dbReference type="CDD" id="cd05250">
    <property type="entry name" value="CC3_like_SDR_a"/>
    <property type="match status" value="1"/>
</dbReference>
<dbReference type="FunFam" id="3.40.50.720:FF:000271">
    <property type="entry name" value="oxidoreductase HTATIP2 isoform X1"/>
    <property type="match status" value="1"/>
</dbReference>
<dbReference type="Gene3D" id="3.40.50.720">
    <property type="entry name" value="NAD(P)-binding Rossmann-like Domain"/>
    <property type="match status" value="1"/>
</dbReference>
<dbReference type="InterPro" id="IPR016040">
    <property type="entry name" value="NAD(P)-bd_dom"/>
</dbReference>
<dbReference type="InterPro" id="IPR036291">
    <property type="entry name" value="NAD(P)-bd_dom_sf"/>
</dbReference>
<dbReference type="InterPro" id="IPR000534">
    <property type="entry name" value="Semialdehyde_DH_NAD-bd"/>
</dbReference>
<dbReference type="PANTHER" id="PTHR14097">
    <property type="entry name" value="OXIDOREDUCTASE HTATIP2"/>
    <property type="match status" value="1"/>
</dbReference>
<dbReference type="PANTHER" id="PTHR14097:SF7">
    <property type="entry name" value="OXIDOREDUCTASE HTATIP2"/>
    <property type="match status" value="1"/>
</dbReference>
<dbReference type="Pfam" id="PF13460">
    <property type="entry name" value="NAD_binding_10"/>
    <property type="match status" value="1"/>
</dbReference>
<dbReference type="SMART" id="SM00859">
    <property type="entry name" value="Semialdhyde_dh"/>
    <property type="match status" value="1"/>
</dbReference>
<dbReference type="SUPFAM" id="SSF51735">
    <property type="entry name" value="NAD(P)-binding Rossmann-fold domains"/>
    <property type="match status" value="1"/>
</dbReference>
<gene>
    <name type="primary">HTATIP2</name>
</gene>
<sequence length="242" mass="27191">MAETEALSKLREDFRMQNKSVFILGASGETGRVLLKEILEQGLFSKVTLIGRRKLTFDEEAYKNVNQEVVDFEKLDDYASAFQGHDVGFCCLGTTRVKAGAEGFVRVDRDYVLKSAELAKAGGCKHFNLLSSKGADKSSNFLYLQVKGEVEAKVEELKFDRYSVFRPGVLLCDRQESRPGEWLVRKFFGSLPESWASGYSVPVVTVVRAMLNNMVRPRDKQMELLENKAIHDLGKVHGSLKP</sequence>
<accession>A2T7G9</accession>
<comment type="function">
    <text evidence="1 2">Represses translation by preventing reactivation of elongation factor eEF1A (By similarity). May also inhibit nuclear import by competing with nuclear import substrates for binding to a subset of nuclear transport receptors. Has additionally been proposed to act as a redox sensor involved in cellular oxidative stress surveillance (By similarity).</text>
</comment>
<comment type="subunit">
    <text evidence="1 2">Monomer. Forms homodimers during oxidative stress (By similarity). Interacts (via N-terminus) with elongation factor EEF1A1 (via middle-region); the interaction is direct and competes with EEF1A1 binding to guanyl-nucleotide exchange factor EEF1B2, thereby inhibiting GDP for GTP exchange and reactivation of EEF1A1 (By similarity). Interacts with nuclear transport receptors XPO4, IPO5/RANBP5, IPO7, IPO9 and KPNB1 as well as GCN1L1/GCN1 and LRPPRC probably through their HEAT repeats. Binds NCOA5/CIA (By similarity).</text>
</comment>
<comment type="subcellular location">
    <subcellularLocation>
        <location evidence="2">Cytoplasm</location>
    </subcellularLocation>
</comment>